<dbReference type="EC" id="7.6.2.8" evidence="1"/>
<dbReference type="EMBL" id="CP000036">
    <property type="protein sequence ID" value="ABB66042.1"/>
    <property type="molecule type" value="Genomic_DNA"/>
</dbReference>
<dbReference type="RefSeq" id="WP_000029459.1">
    <property type="nucleotide sequence ID" value="NC_007613.1"/>
</dbReference>
<dbReference type="SMR" id="Q321G6"/>
<dbReference type="KEGG" id="sbo:SBO_1419"/>
<dbReference type="HOGENOM" id="CLU_000604_1_11_6"/>
<dbReference type="Proteomes" id="UP000007067">
    <property type="component" value="Chromosome"/>
</dbReference>
<dbReference type="GO" id="GO:0005886">
    <property type="term" value="C:plasma membrane"/>
    <property type="evidence" value="ECO:0007669"/>
    <property type="project" value="UniProtKB-SubCell"/>
</dbReference>
<dbReference type="GO" id="GO:0015420">
    <property type="term" value="F:ABC-type vitamin B12 transporter activity"/>
    <property type="evidence" value="ECO:0007669"/>
    <property type="project" value="UniProtKB-UniRule"/>
</dbReference>
<dbReference type="GO" id="GO:0005524">
    <property type="term" value="F:ATP binding"/>
    <property type="evidence" value="ECO:0007669"/>
    <property type="project" value="UniProtKB-KW"/>
</dbReference>
<dbReference type="GO" id="GO:0016887">
    <property type="term" value="F:ATP hydrolysis activity"/>
    <property type="evidence" value="ECO:0007669"/>
    <property type="project" value="InterPro"/>
</dbReference>
<dbReference type="CDD" id="cd03214">
    <property type="entry name" value="ABC_Iron-Siderophores_B12_Hemin"/>
    <property type="match status" value="1"/>
</dbReference>
<dbReference type="FunFam" id="3.40.50.300:FF:000462">
    <property type="entry name" value="Vitamin B12 import ATP-binding protein BtuD"/>
    <property type="match status" value="1"/>
</dbReference>
<dbReference type="Gene3D" id="3.40.50.300">
    <property type="entry name" value="P-loop containing nucleotide triphosphate hydrolases"/>
    <property type="match status" value="1"/>
</dbReference>
<dbReference type="HAMAP" id="MF_01005">
    <property type="entry name" value="BtuD"/>
    <property type="match status" value="1"/>
</dbReference>
<dbReference type="InterPro" id="IPR003593">
    <property type="entry name" value="AAA+_ATPase"/>
</dbReference>
<dbReference type="InterPro" id="IPR003439">
    <property type="entry name" value="ABC_transporter-like_ATP-bd"/>
</dbReference>
<dbReference type="InterPro" id="IPR017871">
    <property type="entry name" value="ABC_transporter-like_CS"/>
</dbReference>
<dbReference type="InterPro" id="IPR023693">
    <property type="entry name" value="ABC_transptr_BtuD"/>
</dbReference>
<dbReference type="InterPro" id="IPR050153">
    <property type="entry name" value="Metal_Ion_Import_ABC"/>
</dbReference>
<dbReference type="InterPro" id="IPR027417">
    <property type="entry name" value="P-loop_NTPase"/>
</dbReference>
<dbReference type="NCBIfam" id="NF002981">
    <property type="entry name" value="PRK03695.1"/>
    <property type="match status" value="1"/>
</dbReference>
<dbReference type="PANTHER" id="PTHR42734">
    <property type="entry name" value="METAL TRANSPORT SYSTEM ATP-BINDING PROTEIN TM_0124-RELATED"/>
    <property type="match status" value="1"/>
</dbReference>
<dbReference type="PANTHER" id="PTHR42734:SF18">
    <property type="entry name" value="VITAMIN B12 IMPORT ATP-BINDING PROTEIN BTUD"/>
    <property type="match status" value="1"/>
</dbReference>
<dbReference type="Pfam" id="PF00005">
    <property type="entry name" value="ABC_tran"/>
    <property type="match status" value="1"/>
</dbReference>
<dbReference type="SMART" id="SM00382">
    <property type="entry name" value="AAA"/>
    <property type="match status" value="1"/>
</dbReference>
<dbReference type="SUPFAM" id="SSF52540">
    <property type="entry name" value="P-loop containing nucleoside triphosphate hydrolases"/>
    <property type="match status" value="1"/>
</dbReference>
<dbReference type="PROSITE" id="PS00211">
    <property type="entry name" value="ABC_TRANSPORTER_1"/>
    <property type="match status" value="1"/>
</dbReference>
<dbReference type="PROSITE" id="PS50893">
    <property type="entry name" value="ABC_TRANSPORTER_2"/>
    <property type="match status" value="1"/>
</dbReference>
<reference key="1">
    <citation type="journal article" date="2005" name="Nucleic Acids Res.">
        <title>Genome dynamics and diversity of Shigella species, the etiologic agents of bacillary dysentery.</title>
        <authorList>
            <person name="Yang F."/>
            <person name="Yang J."/>
            <person name="Zhang X."/>
            <person name="Chen L."/>
            <person name="Jiang Y."/>
            <person name="Yan Y."/>
            <person name="Tang X."/>
            <person name="Wang J."/>
            <person name="Xiong Z."/>
            <person name="Dong J."/>
            <person name="Xue Y."/>
            <person name="Zhu Y."/>
            <person name="Xu X."/>
            <person name="Sun L."/>
            <person name="Chen S."/>
            <person name="Nie H."/>
            <person name="Peng J."/>
            <person name="Xu J."/>
            <person name="Wang Y."/>
            <person name="Yuan Z."/>
            <person name="Wen Y."/>
            <person name="Yao Z."/>
            <person name="Shen Y."/>
            <person name="Qiang B."/>
            <person name="Hou Y."/>
            <person name="Yu J."/>
            <person name="Jin Q."/>
        </authorList>
    </citation>
    <scope>NUCLEOTIDE SEQUENCE [LARGE SCALE GENOMIC DNA]</scope>
    <source>
        <strain>Sb227</strain>
    </source>
</reference>
<accession>Q321G6</accession>
<gene>
    <name evidence="1" type="primary">btuD</name>
    <name type="ordered locus">SBO_1419</name>
</gene>
<keyword id="KW-0067">ATP-binding</keyword>
<keyword id="KW-0997">Cell inner membrane</keyword>
<keyword id="KW-1003">Cell membrane</keyword>
<keyword id="KW-0472">Membrane</keyword>
<keyword id="KW-0547">Nucleotide-binding</keyword>
<keyword id="KW-1278">Translocase</keyword>
<keyword id="KW-0813">Transport</keyword>
<evidence type="ECO:0000255" key="1">
    <source>
        <dbReference type="HAMAP-Rule" id="MF_01005"/>
    </source>
</evidence>
<comment type="function">
    <text evidence="1">Part of the ABC transporter complex BtuCDF involved in vitamin B12 import. Responsible for energy coupling to the transport system.</text>
</comment>
<comment type="catalytic activity">
    <reaction evidence="1">
        <text>an R-cob(III)alamin(out) + ATP + H2O = an R-cob(III)alamin(in) + ADP + phosphate + H(+)</text>
        <dbReference type="Rhea" id="RHEA:17873"/>
        <dbReference type="ChEBI" id="CHEBI:15377"/>
        <dbReference type="ChEBI" id="CHEBI:15378"/>
        <dbReference type="ChEBI" id="CHEBI:30616"/>
        <dbReference type="ChEBI" id="CHEBI:43474"/>
        <dbReference type="ChEBI" id="CHEBI:140785"/>
        <dbReference type="ChEBI" id="CHEBI:456216"/>
        <dbReference type="EC" id="7.6.2.8"/>
    </reaction>
</comment>
<comment type="subunit">
    <text evidence="1">The complex is composed of two ATP-binding proteins (BtuD), two transmembrane proteins (BtuC) and a solute-binding protein (BtuF).</text>
</comment>
<comment type="subcellular location">
    <subcellularLocation>
        <location evidence="1">Cell inner membrane</location>
        <topology evidence="1">Peripheral membrane protein</topology>
    </subcellularLocation>
</comment>
<comment type="similarity">
    <text evidence="1">Belongs to the ABC transporter superfamily. Vitamin B12 importer (TC 3.A.1.13.1) family.</text>
</comment>
<organism>
    <name type="scientific">Shigella boydii serotype 4 (strain Sb227)</name>
    <dbReference type="NCBI Taxonomy" id="300268"/>
    <lineage>
        <taxon>Bacteria</taxon>
        <taxon>Pseudomonadati</taxon>
        <taxon>Pseudomonadota</taxon>
        <taxon>Gammaproteobacteria</taxon>
        <taxon>Enterobacterales</taxon>
        <taxon>Enterobacteriaceae</taxon>
        <taxon>Shigella</taxon>
    </lineage>
</organism>
<feature type="chain" id="PRO_1000083965" description="Vitamin B12 import ATP-binding protein BtuD">
    <location>
        <begin position="1"/>
        <end position="249"/>
    </location>
</feature>
<feature type="domain" description="ABC transporter" evidence="1">
    <location>
        <begin position="1"/>
        <end position="233"/>
    </location>
</feature>
<feature type="binding site" evidence="1">
    <location>
        <begin position="33"/>
        <end position="40"/>
    </location>
    <ligand>
        <name>ATP</name>
        <dbReference type="ChEBI" id="CHEBI:30616"/>
    </ligand>
</feature>
<name>BTUD_SHIBS</name>
<protein>
    <recommendedName>
        <fullName evidence="1">Vitamin B12 import ATP-binding protein BtuD</fullName>
        <ecNumber evidence="1">7.6.2.8</ecNumber>
    </recommendedName>
    <alternativeName>
        <fullName evidence="1">Vitamin B12-transporting ATPase</fullName>
    </alternativeName>
</protein>
<proteinExistence type="inferred from homology"/>
<sequence length="249" mass="27038">MSIVMQLQDVAESTRLGPLSGEVRAGEILHLVGPNGAGKSTLLARMAGMTSGKGSIQFAGQPLEAWSATKLALHRAYLSQQQTPPFAMPVWHYLTLHQHDKTRTELLNDVAGALALDDKLGRSTNQLSGGEWQRVGLAAVVLQITPQANPAGQLLLLDEPMNSLDVAQQSALDKILSALCQQGLAIVMSSHDLNHTLRHAHRAWLLKGGKMLASGRREEVLTPPNLAQAYGMNFRRLDIEGHRMLILTI</sequence>